<dbReference type="EMBL" id="CP001113">
    <property type="protein sequence ID" value="ACF61323.1"/>
    <property type="molecule type" value="Genomic_DNA"/>
</dbReference>
<dbReference type="RefSeq" id="WP_000956588.1">
    <property type="nucleotide sequence ID" value="NZ_CCMR01000001.1"/>
</dbReference>
<dbReference type="SMR" id="B4SYE6"/>
<dbReference type="KEGG" id="see:SNSL254_A4161"/>
<dbReference type="HOGENOM" id="CLU_022130_0_0_6"/>
<dbReference type="Proteomes" id="UP000008824">
    <property type="component" value="Chromosome"/>
</dbReference>
<dbReference type="GO" id="GO:0005829">
    <property type="term" value="C:cytosol"/>
    <property type="evidence" value="ECO:0007669"/>
    <property type="project" value="TreeGrafter"/>
</dbReference>
<dbReference type="CDD" id="cd01462">
    <property type="entry name" value="VWA_YIEM_type"/>
    <property type="match status" value="1"/>
</dbReference>
<dbReference type="Gene3D" id="3.40.50.410">
    <property type="entry name" value="von Willebrand factor, type A domain"/>
    <property type="match status" value="1"/>
</dbReference>
<dbReference type="HAMAP" id="MF_01626">
    <property type="entry name" value="ViaA"/>
    <property type="match status" value="1"/>
</dbReference>
<dbReference type="InterPro" id="IPR008912">
    <property type="entry name" value="Uncharacterised_CoxE"/>
</dbReference>
<dbReference type="InterPro" id="IPR023481">
    <property type="entry name" value="Uncharacterised_ViaA"/>
</dbReference>
<dbReference type="InterPro" id="IPR002035">
    <property type="entry name" value="VWF_A"/>
</dbReference>
<dbReference type="InterPro" id="IPR036465">
    <property type="entry name" value="vWFA_dom_sf"/>
</dbReference>
<dbReference type="NCBIfam" id="NF008230">
    <property type="entry name" value="PRK10997.1"/>
    <property type="match status" value="1"/>
</dbReference>
<dbReference type="PANTHER" id="PTHR36846">
    <property type="entry name" value="PROTEIN VIAA"/>
    <property type="match status" value="1"/>
</dbReference>
<dbReference type="PANTHER" id="PTHR36846:SF1">
    <property type="entry name" value="PROTEIN VIAA"/>
    <property type="match status" value="1"/>
</dbReference>
<dbReference type="Pfam" id="PF05762">
    <property type="entry name" value="VWA_CoxE"/>
    <property type="match status" value="1"/>
</dbReference>
<dbReference type="SMART" id="SM00327">
    <property type="entry name" value="VWA"/>
    <property type="match status" value="1"/>
</dbReference>
<dbReference type="SUPFAM" id="SSF53300">
    <property type="entry name" value="vWA-like"/>
    <property type="match status" value="1"/>
</dbReference>
<name>VIAA_SALNS</name>
<feature type="chain" id="PRO_1000186159" description="Regulatory protein ViaA">
    <location>
        <begin position="1"/>
        <end position="483"/>
    </location>
</feature>
<accession>B4SYE6</accession>
<evidence type="ECO:0000255" key="1">
    <source>
        <dbReference type="HAMAP-Rule" id="MF_01626"/>
    </source>
</evidence>
<proteinExistence type="inferred from homology"/>
<keyword id="KW-0143">Chaperone</keyword>
<keyword id="KW-0963">Cytoplasm</keyword>
<protein>
    <recommendedName>
        <fullName evidence="1">Regulatory protein ViaA</fullName>
    </recommendedName>
    <alternativeName>
        <fullName evidence="1">VWA interacting with AAA+ ATPase</fullName>
    </alternativeName>
</protein>
<reference key="1">
    <citation type="journal article" date="2011" name="J. Bacteriol.">
        <title>Comparative genomics of 28 Salmonella enterica isolates: evidence for CRISPR-mediated adaptive sublineage evolution.</title>
        <authorList>
            <person name="Fricke W.F."/>
            <person name="Mammel M.K."/>
            <person name="McDermott P.F."/>
            <person name="Tartera C."/>
            <person name="White D.G."/>
            <person name="Leclerc J.E."/>
            <person name="Ravel J."/>
            <person name="Cebula T.A."/>
        </authorList>
    </citation>
    <scope>NUCLEOTIDE SEQUENCE [LARGE SCALE GENOMIC DNA]</scope>
    <source>
        <strain>SL254</strain>
    </source>
</reference>
<organism>
    <name type="scientific">Salmonella newport (strain SL254)</name>
    <dbReference type="NCBI Taxonomy" id="423368"/>
    <lineage>
        <taxon>Bacteria</taxon>
        <taxon>Pseudomonadati</taxon>
        <taxon>Pseudomonadota</taxon>
        <taxon>Gammaproteobacteria</taxon>
        <taxon>Enterobacterales</taxon>
        <taxon>Enterobacteriaceae</taxon>
        <taxon>Salmonella</taxon>
    </lineage>
</organism>
<sequence length="483" mass="55431">MLTLDTLNTMLAVSEEGMVEEMILALLASPQLVIFFEKFPRLKNAVTADLPRWREALRSRLKDARVPPELTEEVMCYQQSQLLSTPQFIVQLPQILALLHRLHSPYAAQAKQLTESNSTFTPALHTLFLQRWRLSLVVQATTLNQQLLEEEREQLLSDVQERMTLSGQLEPTLAENDNAAGRLWDMSAGQLKRGDYQLIVKYGEFLAAQPELMQLAEQLGRSREAKSVPKKDAPMETFRTLVREPATVPEQVDGIQQGDDILRLLPPELATLGITELEYEFYRRLVEKQLLTYRLHGEAWREKVTERPVVHQDVDEQPRGPFIVCVDTSGSMGGFNEQCAKAFCLALMRVALADNRRCFIMLFSTDVVRYELSGPEGIEQAIRFLSQRFRGGTDIASCFRAIIERMQGREWFDADAVVISDFIAQRLPDDVVSKVGELQRLHQHRFHAVAMSAHGKPGIMRIFDHIWRFDTGMRSRLLRRWRR</sequence>
<gene>
    <name evidence="1" type="primary">viaA</name>
    <name type="ordered locus">SNSL254_A4161</name>
</gene>
<comment type="function">
    <text evidence="1">Component of the RavA-ViaA chaperone complex, which may act on the membrane to optimize the function of some of the respiratory chains. ViaA stimulates the ATPase activity of RavA.</text>
</comment>
<comment type="subunit">
    <text evidence="1">Homodimer. Interacts with RavA.</text>
</comment>
<comment type="subcellular location">
    <subcellularLocation>
        <location evidence="1">Cytoplasm</location>
    </subcellularLocation>
</comment>
<comment type="similarity">
    <text evidence="1">Belongs to the ViaA family.</text>
</comment>